<name>GM_HHV8P</name>
<sequence>MRASKSDRFLMSSWVKLLFVAVIMYICSAVVPMAATYEGLGFPCYFNNLVNYSALNLTVRNSAKHLTPTLFLEKPEMLVYIFWTFIVDGIAIVYYCLAAVAVYRAKHVHATTMMSMQSWIALLGSHSVLYVAILRMWSMQLFIHVLSYKHVLMAAFVYCIHFCISFAHIQSLITCNSAQWEIPLLEQHVPDNTMMESLLTRWKPVCVNLYLSTTALEMLLFSLSTMMAVGNSFYVLVSDAIFGAVNMFLALTVVWYINTEFFLVKFMRRQVGFYVGVFVGYLILLLPVIRYENAFVQANLHYIVAINISCIPILCILAIVIRVIRSDWGLCTPSAAYMPLATSAPTVDRTPTVHQKPPPLPAKTRARAKVKDISTPAPRTQYQSDHESDSEIDETQMIFI</sequence>
<protein>
    <recommendedName>
        <fullName evidence="1">Envelope glycoprotein M</fullName>
        <shortName evidence="1">gM</shortName>
    </recommendedName>
</protein>
<organismHost>
    <name type="scientific">Homo sapiens</name>
    <name type="common">Human</name>
    <dbReference type="NCBI Taxonomy" id="9606"/>
</organismHost>
<dbReference type="EMBL" id="AF148805">
    <property type="protein sequence ID" value="ABD28890.1"/>
    <property type="molecule type" value="Genomic_DNA"/>
</dbReference>
<dbReference type="RefSeq" id="YP_001129392.1">
    <property type="nucleotide sequence ID" value="NC_009333.1"/>
</dbReference>
<dbReference type="BioGRID" id="1776940">
    <property type="interactions" value="2"/>
</dbReference>
<dbReference type="DNASU" id="4961437"/>
<dbReference type="GeneID" id="4961437"/>
<dbReference type="KEGG" id="vg:4961437"/>
<dbReference type="Proteomes" id="UP000000942">
    <property type="component" value="Segment"/>
</dbReference>
<dbReference type="GO" id="GO:0044175">
    <property type="term" value="C:host cell endosome membrane"/>
    <property type="evidence" value="ECO:0007669"/>
    <property type="project" value="UniProtKB-SubCell"/>
</dbReference>
<dbReference type="GO" id="GO:0044177">
    <property type="term" value="C:host cell Golgi apparatus"/>
    <property type="evidence" value="ECO:0007669"/>
    <property type="project" value="UniProtKB-SubCell"/>
</dbReference>
<dbReference type="GO" id="GO:0044201">
    <property type="term" value="C:host cell nuclear inner membrane"/>
    <property type="evidence" value="ECO:0007669"/>
    <property type="project" value="UniProtKB-SubCell"/>
</dbReference>
<dbReference type="GO" id="GO:0016020">
    <property type="term" value="C:membrane"/>
    <property type="evidence" value="ECO:0007669"/>
    <property type="project" value="UniProtKB-KW"/>
</dbReference>
<dbReference type="GO" id="GO:0019031">
    <property type="term" value="C:viral envelope"/>
    <property type="evidence" value="ECO:0000314"/>
    <property type="project" value="CACAO"/>
</dbReference>
<dbReference type="GO" id="GO:0055036">
    <property type="term" value="C:virion membrane"/>
    <property type="evidence" value="ECO:0007669"/>
    <property type="project" value="UniProtKB-SubCell"/>
</dbReference>
<dbReference type="HAMAP" id="MF_04035">
    <property type="entry name" value="HSV_GM"/>
    <property type="match status" value="1"/>
</dbReference>
<dbReference type="InterPro" id="IPR000785">
    <property type="entry name" value="Herpes_glycop_M"/>
</dbReference>
<dbReference type="Pfam" id="PF01528">
    <property type="entry name" value="Herpes_glycop"/>
    <property type="match status" value="1"/>
</dbReference>
<dbReference type="PRINTS" id="PR00333">
    <property type="entry name" value="HSVINTEGRLMP"/>
</dbReference>
<feature type="chain" id="PRO_0000423792" description="Envelope glycoprotein M">
    <location>
        <begin position="1"/>
        <end position="400"/>
    </location>
</feature>
<feature type="topological domain" description="Intravirion" evidence="1">
    <location>
        <begin position="1"/>
        <end position="16"/>
    </location>
</feature>
<feature type="transmembrane region" description="Helical" evidence="1">
    <location>
        <begin position="17"/>
        <end position="37"/>
    </location>
</feature>
<feature type="topological domain" description="Virion surface" evidence="1">
    <location>
        <begin position="38"/>
        <end position="76"/>
    </location>
</feature>
<feature type="transmembrane region" description="Helical" evidence="1">
    <location>
        <begin position="77"/>
        <end position="97"/>
    </location>
</feature>
<feature type="topological domain" description="Intravirion" evidence="1">
    <location>
        <begin position="98"/>
        <end position="113"/>
    </location>
</feature>
<feature type="transmembrane region" description="Helical" evidence="1">
    <location>
        <begin position="114"/>
        <end position="134"/>
    </location>
</feature>
<feature type="topological domain" description="Virion surface" evidence="1">
    <location>
        <begin position="135"/>
        <end position="152"/>
    </location>
</feature>
<feature type="transmembrane region" description="Helical" evidence="1">
    <location>
        <begin position="153"/>
        <end position="173"/>
    </location>
</feature>
<feature type="topological domain" description="Intravirion" evidence="1">
    <location>
        <begin position="174"/>
        <end position="208"/>
    </location>
</feature>
<feature type="transmembrane region" description="Helical" evidence="1">
    <location>
        <begin position="209"/>
        <end position="229"/>
    </location>
</feature>
<feature type="topological domain" description="Virion surface" evidence="1">
    <location>
        <begin position="230"/>
        <end position="234"/>
    </location>
</feature>
<feature type="transmembrane region" description="Helical" evidence="1">
    <location>
        <begin position="235"/>
        <end position="255"/>
    </location>
</feature>
<feature type="topological domain" description="Intravirion" evidence="1">
    <location>
        <begin position="256"/>
        <end position="270"/>
    </location>
</feature>
<feature type="transmembrane region" description="Helical" evidence="1">
    <location>
        <begin position="271"/>
        <end position="291"/>
    </location>
</feature>
<feature type="topological domain" description="Virion surface" evidence="1">
    <location>
        <begin position="292"/>
        <end position="300"/>
    </location>
</feature>
<feature type="transmembrane region" description="Helical" evidence="1">
    <location>
        <begin position="301"/>
        <end position="321"/>
    </location>
</feature>
<feature type="topological domain" description="Intravirion" evidence="1">
    <location>
        <begin position="322"/>
        <end position="400"/>
    </location>
</feature>
<feature type="region of interest" description="Disordered" evidence="2">
    <location>
        <begin position="348"/>
        <end position="394"/>
    </location>
</feature>
<feature type="disulfide bond" description="Interchain (with gN)" evidence="1">
    <location>
        <position position="44"/>
    </location>
</feature>
<evidence type="ECO:0000255" key="1">
    <source>
        <dbReference type="HAMAP-Rule" id="MF_04035"/>
    </source>
</evidence>
<evidence type="ECO:0000256" key="2">
    <source>
        <dbReference type="SAM" id="MobiDB-lite"/>
    </source>
</evidence>
<evidence type="ECO:0000269" key="3">
    <source>
    </source>
</evidence>
<keyword id="KW-1015">Disulfide bond</keyword>
<keyword id="KW-0325">Glycoprotein</keyword>
<keyword id="KW-1039">Host endosome</keyword>
<keyword id="KW-1040">Host Golgi apparatus</keyword>
<keyword id="KW-1043">Host membrane</keyword>
<keyword id="KW-1048">Host nucleus</keyword>
<keyword id="KW-0472">Membrane</keyword>
<keyword id="KW-1185">Reference proteome</keyword>
<keyword id="KW-0812">Transmembrane</keyword>
<keyword id="KW-1133">Transmembrane helix</keyword>
<keyword id="KW-0261">Viral envelope protein</keyword>
<keyword id="KW-0946">Virion</keyword>
<gene>
    <name evidence="1" type="primary">gM</name>
    <name type="synonym">ORF39</name>
</gene>
<proteinExistence type="evidence at protein level"/>
<organism>
    <name type="scientific">Human herpesvirus 8 type P (isolate GK18)</name>
    <name type="common">HHV-8</name>
    <name type="synonym">Kaposi's sarcoma-associated herpesvirus</name>
    <dbReference type="NCBI Taxonomy" id="868565"/>
    <lineage>
        <taxon>Viruses</taxon>
        <taxon>Duplodnaviria</taxon>
        <taxon>Heunggongvirae</taxon>
        <taxon>Peploviricota</taxon>
        <taxon>Herviviricetes</taxon>
        <taxon>Herpesvirales</taxon>
        <taxon>Orthoherpesviridae</taxon>
        <taxon>Gammaherpesvirinae</taxon>
        <taxon>Rhadinovirus</taxon>
        <taxon>Rhadinovirus humangamma8</taxon>
        <taxon>Human herpesvirus 8</taxon>
    </lineage>
</organism>
<accession>F5HDD0</accession>
<comment type="function">
    <text evidence="1 3">Envelope glycoprotein important for virion assembly and egress. Plays a role in the correct incorporation of gH-gL into virion membrane. Directs the glycoprotein N (gN) to the host trans-Golgi network.</text>
</comment>
<comment type="subunit">
    <text evidence="1 3">Interacts (via N-terminus) with gN (via N-terminus). The gM-gN heterodimer forms the gCII complex.</text>
</comment>
<comment type="subcellular location">
    <subcellularLocation>
        <location evidence="1 3">Virion membrane</location>
        <topology evidence="1 3">Multi-pass membrane protein</topology>
    </subcellularLocation>
    <subcellularLocation>
        <location evidence="1">Host Golgi apparatus</location>
        <location evidence="1">Host trans-Golgi network</location>
    </subcellularLocation>
    <subcellularLocation>
        <location evidence="1">Host endosome membrane</location>
        <topology evidence="1 3">Multi-pass membrane protein</topology>
    </subcellularLocation>
    <subcellularLocation>
        <location evidence="1 3">Host nucleus inner membrane</location>
        <topology evidence="1 3">Multi-pass membrane protein</topology>
    </subcellularLocation>
    <text evidence="1">During virion morphogenesis, this protein accumulates in the trans-Golgi network where secondary envelopment occurs.</text>
</comment>
<comment type="PTM">
    <text evidence="3">N-glycosylated.</text>
</comment>
<comment type="similarity">
    <text evidence="1">Belongs to the herpesviridae glycoprotein M family.</text>
</comment>
<reference key="1">
    <citation type="journal article" date="1999" name="J. Virol.">
        <title>Identification of a spliced gene from Kaposi's sarcoma-associated herpesvirus encoding a protein with similarities to latent membrane proteins 1 and 2A of Epstein-Barr virus.</title>
        <authorList>
            <person name="Glenn M."/>
            <person name="Rainbow L."/>
            <person name="Aurade F."/>
            <person name="Davison A."/>
            <person name="Schulz T.F."/>
        </authorList>
    </citation>
    <scope>NUCLEOTIDE SEQUENCE [LARGE SCALE GENOMIC DNA]</scope>
</reference>
<reference key="2">
    <citation type="journal article" date="2006" name="J. Gen. Virol.">
        <title>Kaposi's sarcoma-associated herpesvirus immune modulation: an overview.</title>
        <authorList>
            <person name="Rezaee S.A.R."/>
            <person name="Cunningham C."/>
            <person name="Davison A.J."/>
            <person name="Blackbourn D.J."/>
        </authorList>
    </citation>
    <scope>NUCLEOTIDE SEQUENCE [LARGE SCALE GENOMIC DNA]</scope>
</reference>
<reference key="3">
    <citation type="journal article" date="2003" name="J. Gen. Virol.">
        <title>Glycoproteins M and N of human herpesvirus 8 form a complex and inhibit cell fusion.</title>
        <authorList>
            <person name="Koyano S."/>
            <person name="Mar E.C."/>
            <person name="Stamey F.R."/>
            <person name="Inoue N."/>
        </authorList>
    </citation>
    <scope>FUNCTION</scope>
    <scope>GLYCOSYLATION</scope>
    <scope>SUBCELLULAR LOCATION</scope>
    <scope>INTERACTION WITH GN</scope>
</reference>